<protein>
    <recommendedName>
        <fullName>T-box transcription factor TBX5</fullName>
        <shortName>T-box protein 5</shortName>
    </recommendedName>
</protein>
<gene>
    <name type="primary">TBX5</name>
</gene>
<keyword id="KW-0002">3D-structure</keyword>
<keyword id="KW-0007">Acetylation</keyword>
<keyword id="KW-0025">Alternative splicing</keyword>
<keyword id="KW-1020">Atrial fibrillation</keyword>
<keyword id="KW-0122">Cardiomyopathy</keyword>
<keyword id="KW-0963">Cytoplasm</keyword>
<keyword id="KW-0217">Developmental protein</keyword>
<keyword id="KW-0225">Disease variant</keyword>
<keyword id="KW-0238">DNA-binding</keyword>
<keyword id="KW-0539">Nucleus</keyword>
<keyword id="KW-1267">Proteomics identification</keyword>
<keyword id="KW-1185">Reference proteome</keyword>
<keyword id="KW-0804">Transcription</keyword>
<keyword id="KW-0805">Transcription regulation</keyword>
<name>TBX5_HUMAN</name>
<reference key="1">
    <citation type="journal article" date="1997" name="Nat. Genet.">
        <title>Holt-Oram syndrome is caused by mutations in TBX5, a member of the Brachyury (T) gene family.</title>
        <authorList>
            <person name="Li Q.Y."/>
            <person name="Newbury-Ecob R."/>
            <person name="Terrett J.A."/>
            <person name="Wilson D.I."/>
            <person name="Curtis A."/>
            <person name="Yi C.H."/>
            <person name="Bullen P.J."/>
            <person name="Strachan T."/>
            <person name="Robson S."/>
            <person name="Bonnet D."/>
            <person name="Young I.E."/>
            <person name="Raeburn J.A."/>
            <person name="Buckler A.J."/>
            <person name="Gebuhr T."/>
            <person name="Law D.J."/>
            <person name="Brook J.D."/>
        </authorList>
    </citation>
    <scope>NUCLEOTIDE SEQUENCE [MRNA] (ISOFORM 1)</scope>
    <scope>FUNCTION</scope>
    <scope>INVOLVEMENT IN HOS</scope>
</reference>
<reference key="2">
    <citation type="journal article" date="1997" name="Nat. Genet.">
        <title>Mutations in human TBX5 cause limb and cardiac malformation in Holt-Oram syndrome.</title>
        <authorList>
            <person name="Basson C.T."/>
            <person name="Bachinsky D.R."/>
            <person name="Lin R.C."/>
            <person name="Levi T."/>
            <person name="Elkins J.A."/>
            <person name="Soults J."/>
            <person name="Grayzel D."/>
            <person name="Kroumpouzou E."/>
            <person name="Traill T.A."/>
            <person name="Leblanc-Straceski J."/>
            <person name="Renault B."/>
            <person name="Kucherlapati R."/>
            <person name="Seidman J.G."/>
            <person name="Seidman C.E."/>
        </authorList>
    </citation>
    <scope>NUCLEOTIDE SEQUENCE [MRNA] (ISOFORM 2)</scope>
    <scope>ALTERNATIVE SPLICING</scope>
    <scope>VARIANT HOS GLN-237</scope>
</reference>
<reference key="3">
    <citation type="journal article" date="1999" name="Proc. Natl. Acad. Sci. U.S.A.">
        <title>Different TBX5 interactions in heart and limb defined by Holt-Oram syndrome mutations.</title>
        <authorList>
            <person name="Basson C.T."/>
            <person name="Huang T."/>
            <person name="Lin R.C."/>
            <person name="Bachinksy D.R."/>
            <person name="Weremowicz S."/>
            <person name="Vaglio A."/>
            <person name="Bruzzone R."/>
            <person name="Quadrelli R."/>
            <person name="Lerone M."/>
            <person name="Romeo G."/>
            <person name="Silengo M."/>
            <person name="Pereira A."/>
            <person name="Krieger J."/>
            <person name="Mesquita S.F."/>
            <person name="Kamisago M."/>
            <person name="Morton C.C."/>
            <person name="Pierpont M.E.M."/>
            <person name="Muller C.W."/>
            <person name="Seidman J.G."/>
            <person name="Seidman C.E."/>
        </authorList>
    </citation>
    <scope>NUCLEOTIDE SEQUENCE [MRNA] (ISOFORM 1)</scope>
    <scope>VARIANTS HOS ARG-80; GLN-237 AND TRP-237</scope>
</reference>
<reference key="4">
    <citation type="journal article" date="2000" name="J. Med. Genet.">
        <title>The mutation spectrum in Holt-Oram syndrome.</title>
        <authorList>
            <person name="Cross S.J."/>
            <person name="Ching Y.-H."/>
            <person name="Li Q.Y."/>
            <person name="Armstrong-Buisseret L."/>
            <person name="Spranger S."/>
            <person name="Lyonnet S."/>
            <person name="Bonnet D."/>
            <person name="Penttinen M."/>
            <person name="Jonveaux P."/>
            <person name="Leheup B."/>
            <person name="Mortier G."/>
            <person name="Van Ravenswaaij C."/>
            <person name="Gardiner C.A."/>
        </authorList>
    </citation>
    <scope>NUCLEOTIDE SEQUENCE [MRNA] (ISOFORM 1)</scope>
</reference>
<reference key="5">
    <citation type="submission" date="2000-11" db="EMBL/GenBank/DDBJ databases">
        <title>Human transcription factor TBX5mRNA, alternatively spliced.</title>
        <authorList>
            <person name="Demura M."/>
            <person name="Yoneda T."/>
            <person name="Takeda Y."/>
            <person name="Furukawa K."/>
            <person name="Mabuti H."/>
        </authorList>
    </citation>
    <scope>NUCLEOTIDE SEQUENCE [MRNA] (ISOFORM 3)</scope>
</reference>
<reference key="6">
    <citation type="journal article" date="2006" name="Nature">
        <title>The finished DNA sequence of human chromosome 12.</title>
        <authorList>
            <person name="Scherer S.E."/>
            <person name="Muzny D.M."/>
            <person name="Buhay C.J."/>
            <person name="Chen R."/>
            <person name="Cree A."/>
            <person name="Ding Y."/>
            <person name="Dugan-Rocha S."/>
            <person name="Gill R."/>
            <person name="Gunaratne P."/>
            <person name="Harris R.A."/>
            <person name="Hawes A.C."/>
            <person name="Hernandez J."/>
            <person name="Hodgson A.V."/>
            <person name="Hume J."/>
            <person name="Jackson A."/>
            <person name="Khan Z.M."/>
            <person name="Kovar-Smith C."/>
            <person name="Lewis L.R."/>
            <person name="Lozado R.J."/>
            <person name="Metzker M.L."/>
            <person name="Milosavljevic A."/>
            <person name="Miner G.R."/>
            <person name="Montgomery K.T."/>
            <person name="Morgan M.B."/>
            <person name="Nazareth L.V."/>
            <person name="Scott G."/>
            <person name="Sodergren E."/>
            <person name="Song X.-Z."/>
            <person name="Steffen D."/>
            <person name="Lovering R.C."/>
            <person name="Wheeler D.A."/>
            <person name="Worley K.C."/>
            <person name="Yuan Y."/>
            <person name="Zhang Z."/>
            <person name="Adams C.Q."/>
            <person name="Ansari-Lari M.A."/>
            <person name="Ayele M."/>
            <person name="Brown M.J."/>
            <person name="Chen G."/>
            <person name="Chen Z."/>
            <person name="Clerc-Blankenburg K.P."/>
            <person name="Davis C."/>
            <person name="Delgado O."/>
            <person name="Dinh H.H."/>
            <person name="Draper H."/>
            <person name="Gonzalez-Garay M.L."/>
            <person name="Havlak P."/>
            <person name="Jackson L.R."/>
            <person name="Jacob L.S."/>
            <person name="Kelly S.H."/>
            <person name="Li L."/>
            <person name="Li Z."/>
            <person name="Liu J."/>
            <person name="Liu W."/>
            <person name="Lu J."/>
            <person name="Maheshwari M."/>
            <person name="Nguyen B.-V."/>
            <person name="Okwuonu G.O."/>
            <person name="Pasternak S."/>
            <person name="Perez L.M."/>
            <person name="Plopper F.J.H."/>
            <person name="Santibanez J."/>
            <person name="Shen H."/>
            <person name="Tabor P.E."/>
            <person name="Verduzco D."/>
            <person name="Waldron L."/>
            <person name="Wang Q."/>
            <person name="Williams G.A."/>
            <person name="Zhang J."/>
            <person name="Zhou J."/>
            <person name="Allen C.C."/>
            <person name="Amin A.G."/>
            <person name="Anyalebechi V."/>
            <person name="Bailey M."/>
            <person name="Barbaria J.A."/>
            <person name="Bimage K.E."/>
            <person name="Bryant N.P."/>
            <person name="Burch P.E."/>
            <person name="Burkett C.E."/>
            <person name="Burrell K.L."/>
            <person name="Calderon E."/>
            <person name="Cardenas V."/>
            <person name="Carter K."/>
            <person name="Casias K."/>
            <person name="Cavazos I."/>
            <person name="Cavazos S.R."/>
            <person name="Ceasar H."/>
            <person name="Chacko J."/>
            <person name="Chan S.N."/>
            <person name="Chavez D."/>
            <person name="Christopoulos C."/>
            <person name="Chu J."/>
            <person name="Cockrell R."/>
            <person name="Cox C.D."/>
            <person name="Dang M."/>
            <person name="Dathorne S.R."/>
            <person name="David R."/>
            <person name="Davis C.M."/>
            <person name="Davy-Carroll L."/>
            <person name="Deshazo D.R."/>
            <person name="Donlin J.E."/>
            <person name="D'Souza L."/>
            <person name="Eaves K.A."/>
            <person name="Egan A."/>
            <person name="Emery-Cohen A.J."/>
            <person name="Escotto M."/>
            <person name="Flagg N."/>
            <person name="Forbes L.D."/>
            <person name="Gabisi A.M."/>
            <person name="Garza M."/>
            <person name="Hamilton C."/>
            <person name="Henderson N."/>
            <person name="Hernandez O."/>
            <person name="Hines S."/>
            <person name="Hogues M.E."/>
            <person name="Huang M."/>
            <person name="Idlebird D.G."/>
            <person name="Johnson R."/>
            <person name="Jolivet A."/>
            <person name="Jones S."/>
            <person name="Kagan R."/>
            <person name="King L.M."/>
            <person name="Leal B."/>
            <person name="Lebow H."/>
            <person name="Lee S."/>
            <person name="LeVan J.M."/>
            <person name="Lewis L.C."/>
            <person name="London P."/>
            <person name="Lorensuhewa L.M."/>
            <person name="Loulseged H."/>
            <person name="Lovett D.A."/>
            <person name="Lucier A."/>
            <person name="Lucier R.L."/>
            <person name="Ma J."/>
            <person name="Madu R.C."/>
            <person name="Mapua P."/>
            <person name="Martindale A.D."/>
            <person name="Martinez E."/>
            <person name="Massey E."/>
            <person name="Mawhiney S."/>
            <person name="Meador M.G."/>
            <person name="Mendez S."/>
            <person name="Mercado C."/>
            <person name="Mercado I.C."/>
            <person name="Merritt C.E."/>
            <person name="Miner Z.L."/>
            <person name="Minja E."/>
            <person name="Mitchell T."/>
            <person name="Mohabbat F."/>
            <person name="Mohabbat K."/>
            <person name="Montgomery B."/>
            <person name="Moore N."/>
            <person name="Morris S."/>
            <person name="Munidasa M."/>
            <person name="Ngo R.N."/>
            <person name="Nguyen N.B."/>
            <person name="Nickerson E."/>
            <person name="Nwaokelemeh O.O."/>
            <person name="Nwokenkwo S."/>
            <person name="Obregon M."/>
            <person name="Oguh M."/>
            <person name="Oragunye N."/>
            <person name="Oviedo R.J."/>
            <person name="Parish B.J."/>
            <person name="Parker D.N."/>
            <person name="Parrish J."/>
            <person name="Parks K.L."/>
            <person name="Paul H.A."/>
            <person name="Payton B.A."/>
            <person name="Perez A."/>
            <person name="Perrin W."/>
            <person name="Pickens A."/>
            <person name="Primus E.L."/>
            <person name="Pu L.-L."/>
            <person name="Puazo M."/>
            <person name="Quiles M.M."/>
            <person name="Quiroz J.B."/>
            <person name="Rabata D."/>
            <person name="Reeves K."/>
            <person name="Ruiz S.J."/>
            <person name="Shao H."/>
            <person name="Sisson I."/>
            <person name="Sonaike T."/>
            <person name="Sorelle R.P."/>
            <person name="Sutton A.E."/>
            <person name="Svatek A.F."/>
            <person name="Svetz L.A."/>
            <person name="Tamerisa K.S."/>
            <person name="Taylor T.R."/>
            <person name="Teague B."/>
            <person name="Thomas N."/>
            <person name="Thorn R.D."/>
            <person name="Trejos Z.Y."/>
            <person name="Trevino B.K."/>
            <person name="Ukegbu O.N."/>
            <person name="Urban J.B."/>
            <person name="Vasquez L.I."/>
            <person name="Vera V.A."/>
            <person name="Villasana D.M."/>
            <person name="Wang L."/>
            <person name="Ward-Moore S."/>
            <person name="Warren J.T."/>
            <person name="Wei X."/>
            <person name="White F."/>
            <person name="Williamson A.L."/>
            <person name="Wleczyk R."/>
            <person name="Wooden H.S."/>
            <person name="Wooden S.H."/>
            <person name="Yen J."/>
            <person name="Yoon L."/>
            <person name="Yoon V."/>
            <person name="Zorrilla S.E."/>
            <person name="Nelson D."/>
            <person name="Kucherlapati R."/>
            <person name="Weinstock G."/>
            <person name="Gibbs R.A."/>
        </authorList>
    </citation>
    <scope>NUCLEOTIDE SEQUENCE [LARGE SCALE GENOMIC DNA]</scope>
</reference>
<reference key="7">
    <citation type="submission" date="2005-07" db="EMBL/GenBank/DDBJ databases">
        <authorList>
            <person name="Mural R.J."/>
            <person name="Istrail S."/>
            <person name="Sutton G.G."/>
            <person name="Florea L."/>
            <person name="Halpern A.L."/>
            <person name="Mobarry C.M."/>
            <person name="Lippert R."/>
            <person name="Walenz B."/>
            <person name="Shatkay H."/>
            <person name="Dew I."/>
            <person name="Miller J.R."/>
            <person name="Flanigan M.J."/>
            <person name="Edwards N.J."/>
            <person name="Bolanos R."/>
            <person name="Fasulo D."/>
            <person name="Halldorsson B.V."/>
            <person name="Hannenhalli S."/>
            <person name="Turner R."/>
            <person name="Yooseph S."/>
            <person name="Lu F."/>
            <person name="Nusskern D.R."/>
            <person name="Shue B.C."/>
            <person name="Zheng X.H."/>
            <person name="Zhong F."/>
            <person name="Delcher A.L."/>
            <person name="Huson D.H."/>
            <person name="Kravitz S.A."/>
            <person name="Mouchard L."/>
            <person name="Reinert K."/>
            <person name="Remington K.A."/>
            <person name="Clark A.G."/>
            <person name="Waterman M.S."/>
            <person name="Eichler E.E."/>
            <person name="Adams M.D."/>
            <person name="Hunkapiller M.W."/>
            <person name="Myers E.W."/>
            <person name="Venter J.C."/>
        </authorList>
    </citation>
    <scope>NUCLEOTIDE SEQUENCE [LARGE SCALE GENOMIC DNA]</scope>
</reference>
<reference key="8">
    <citation type="journal article" date="2004" name="Genome Res.">
        <title>The status, quality, and expansion of the NIH full-length cDNA project: the Mammalian Gene Collection (MGC).</title>
        <authorList>
            <consortium name="The MGC Project Team"/>
        </authorList>
    </citation>
    <scope>NUCLEOTIDE SEQUENCE [LARGE SCALE MRNA] (ISOFORM 1)</scope>
    <source>
        <tissue>Lung</tissue>
        <tissue>Spleen</tissue>
    </source>
</reference>
<reference key="9">
    <citation type="journal article" date="2003" name="Ann. Genet.">
        <title>Holt-Oram syndrome: a new mutation in the TBX5 gene in two unrelated families.</title>
        <authorList>
            <person name="Gruenauer-Kloevekorn C."/>
            <person name="Froster U.G."/>
        </authorList>
    </citation>
    <scope>INVOLVEMENT IN HOS</scope>
</reference>
<reference key="10">
    <citation type="journal article" date="2013" name="Hum. Mutat.">
        <title>GATA4 loss-of-function mutations underlie familial tetralogy of fallot.</title>
        <authorList>
            <person name="Yang Y.Q."/>
            <person name="Gharibeh L."/>
            <person name="Li R.G."/>
            <person name="Xin Y.F."/>
            <person name="Wang J."/>
            <person name="Liu Z.M."/>
            <person name="Qiu X.B."/>
            <person name="Xu Y.J."/>
            <person name="Xu L."/>
            <person name="Qu X.K."/>
            <person name="Liu X."/>
            <person name="Fang W.Y."/>
            <person name="Huang R.T."/>
            <person name="Xue S."/>
            <person name="Nemer G."/>
        </authorList>
    </citation>
    <scope>INTERACTION WITH GATA4</scope>
</reference>
<reference key="11">
    <citation type="journal article" date="2015" name="Biochem. Biophys. Res. Commun.">
        <title>TBX5 loss-of-function mutation contributes to familial dilated cardiomyopathy.</title>
        <authorList>
            <person name="Zhang X.L."/>
            <person name="Qiu X.B."/>
            <person name="Yuan F."/>
            <person name="Wang J."/>
            <person name="Zhao C.M."/>
            <person name="Li R.G."/>
            <person name="Xu L."/>
            <person name="Xu Y.J."/>
            <person name="Shi H.Y."/>
            <person name="Hou X.M."/>
            <person name="Qu X.K."/>
            <person name="Xu Y.W."/>
            <person name="Yang Y.Q."/>
        </authorList>
    </citation>
    <scope>FUNCTION</scope>
    <scope>INVOLVEMENT IN DCM</scope>
    <scope>VARIANT ALA-154</scope>
    <scope>CHARACTERIZATION OF VARIANT ALA-154</scope>
</reference>
<reference key="12">
    <citation type="journal article" date="2015" name="Int. J. Mol. Med.">
        <title>A novel TBX5 loss-of-function mutation associated with sporadic dilated cardiomyopathy.</title>
        <authorList>
            <person name="Zhou W."/>
            <person name="Zhao L."/>
            <person name="Jiang J.Q."/>
            <person name="Jiang W.F."/>
            <person name="Yang Y.Q."/>
            <person name="Qiu X.B."/>
        </authorList>
    </citation>
    <scope>FUNCTION</scope>
    <scope>INVOLVEMENT IN DCM</scope>
    <scope>VARIANT THR-143</scope>
    <scope>CHARACTERIZATION OF VARIANT THR-143</scope>
</reference>
<reference key="13">
    <citation type="journal article" date="2017" name="J. Mol. Cell. Cardiol.">
        <title>Acetylation of TBX5 by KAT2B and KAT2A regulates heart and limb development.</title>
        <authorList>
            <person name="Ghosh T.K."/>
            <person name="Aparicio-Sanchez J.J."/>
            <person name="Buxton S."/>
            <person name="Ketley A."/>
            <person name="Mohamed T."/>
            <person name="Rutland C.S."/>
            <person name="Loughna S."/>
            <person name="Brook J.D."/>
        </authorList>
    </citation>
    <scope>FUNCTION</scope>
    <scope>SUBCELLULAR LOCATION</scope>
    <scope>ACETYLATION AT LYS-339</scope>
    <scope>MUTAGENESIS OF LYS-234; LYS-325; LYS-327; LYS-339 AND LYS-340</scope>
</reference>
<reference key="14">
    <citation type="journal article" date="2010" name="J. Mol. Biol.">
        <title>Structural basis of TBX5-DNA recognition: the T-box domain in its DNA-bound and -unbound form.</title>
        <authorList>
            <person name="Stirnimann C.U."/>
            <person name="Ptchelkine D."/>
            <person name="Grimm C."/>
            <person name="Muller C.W."/>
        </authorList>
    </citation>
    <scope>X-RAY CRYSTALLOGRAPHY (1.9 ANGSTROMS) OF 51-251 IN COMPLEX WITH DNA</scope>
    <scope>CHARACTERIZATION OF VARIANTS HOS ARG-80 AND TRP-237</scope>
    <scope>SUBUNIT</scope>
</reference>
<reference key="15">
    <citation type="journal article" date="2016" name="Biochemistry">
        <title>Intermolecular interactions of cardiac transcription factors NKX2.5 and TBX5.</title>
        <authorList>
            <person name="Pradhan L."/>
            <person name="Gopal S."/>
            <person name="Li S."/>
            <person name="Ashur S."/>
            <person name="Suryanarayanan S."/>
            <person name="Kasahara H."/>
            <person name="Nam H.J."/>
        </authorList>
    </citation>
    <scope>X-RAY CRYSTALLOGRAPHY (2.58 ANGSTROMS) OF 1-239 OF HOMODIMER AND DNA</scope>
    <scope>X-RAY CRYSTALLOGRAPHY (2.82 ANGSTROMS) OF 53-238 IN COMPLEX WITH NKX2-5 AND DNA</scope>
    <scope>INTERACTION WITH NKX2-5</scope>
    <scope>DNA-BINDING</scope>
</reference>
<reference key="16">
    <citation type="journal article" date="2000" name="Am. J. Med. Genet.">
        <title>Three novel TBX5 mutations in Chinese patients with Holt-Oram syndrome.</title>
        <authorList>
            <person name="Yang J."/>
            <person name="Hu D."/>
            <person name="Xia J."/>
            <person name="Yang Y."/>
            <person name="Ying B."/>
            <person name="Hu J."/>
            <person name="Zhou X."/>
        </authorList>
    </citation>
    <scope>VARIANTS HOS LYS-49 AND THR-54</scope>
</reference>
<reference key="17">
    <citation type="journal article" date="2005" name="Nat. Genet.">
        <title>Mutation in myosin heavy chain 6 causes atrial septal defect.</title>
        <authorList>
            <person name="Ching Y.-H."/>
            <person name="Ghosh T.K."/>
            <person name="Cross S.J."/>
            <person name="Packham E.A."/>
            <person name="Honeyman L."/>
            <person name="Loughna S."/>
            <person name="Robinson T.E."/>
            <person name="Dearlove A.M."/>
            <person name="Ribas G."/>
            <person name="Bonser A.J."/>
            <person name="Thomas N.R."/>
            <person name="Scotter A.J."/>
            <person name="Caves L.S.D."/>
            <person name="Tyrrell G.P."/>
            <person name="Newbury-Ecob R.A."/>
            <person name="Munnich A."/>
            <person name="Bonnet D."/>
            <person name="Brook J.D."/>
        </authorList>
    </citation>
    <scope>CHARACTERIZATION OF VARIANT HOS GLN-237</scope>
</reference>
<reference key="18">
    <citation type="journal article" date="2016" name="Int. J. Med. Sci.">
        <title>Prevalence and Spectrum of TBX5 Mutation in Patients with Lone Atrial Fibrillation.</title>
        <authorList>
            <person name="Wang Z.C."/>
            <person name="Ji W.H."/>
            <person name="Ruan C.W."/>
            <person name="Liu X.Y."/>
            <person name="Qiu X.B."/>
            <person name="Yuan F."/>
            <person name="Li R.G."/>
            <person name="Xu Y.J."/>
            <person name="Liu X."/>
            <person name="Huang R.T."/>
            <person name="Xue S."/>
            <person name="Yang Y.Q."/>
        </authorList>
    </citation>
    <scope>VARIANT ASP-170</scope>
    <scope>CHARACTERIZATION OF VARIANT ASP-170</scope>
    <scope>INVOLVEMENT IN AF</scope>
    <scope>FUNCTION</scope>
</reference>
<reference key="19">
    <citation type="journal article" date="2016" name="Mol. Med. Report.">
        <title>TBX5 loss-of-function mutation contributes to atrial fibrillation and atypical Holt-Oram syndrome.</title>
        <authorList>
            <person name="Guo D.F."/>
            <person name="Li R.G."/>
            <person name="Yuan F."/>
            <person name="Shi H.Y."/>
            <person name="Hou X.M."/>
            <person name="Qu X.K."/>
            <person name="Xu Y.J."/>
            <person name="Zhang M."/>
            <person name="Liu X."/>
            <person name="Jiang J.Q."/>
            <person name="Yang Y.Q."/>
            <person name="Qiu X.B."/>
        </authorList>
    </citation>
    <scope>VARIANT SER-132</scope>
    <scope>INVOLVEMENT IN AF</scope>
    <scope>CHARACTERIZATION OF VARIANT SER-132</scope>
    <scope>FUNCTION</scope>
</reference>
<dbReference type="EMBL" id="Y09445">
    <property type="protein sequence ID" value="CAA70592.1"/>
    <property type="molecule type" value="mRNA"/>
</dbReference>
<dbReference type="EMBL" id="U80987">
    <property type="protein sequence ID" value="AAC51644.1"/>
    <property type="molecule type" value="mRNA"/>
</dbReference>
<dbReference type="EMBL" id="U89353">
    <property type="protein sequence ID" value="AAC04619.1"/>
    <property type="molecule type" value="mRNA"/>
</dbReference>
<dbReference type="EMBL" id="AF221714">
    <property type="protein sequence ID" value="AAF34659.1"/>
    <property type="molecule type" value="mRNA"/>
</dbReference>
<dbReference type="EMBL" id="AB051068">
    <property type="protein sequence ID" value="BAB55448.1"/>
    <property type="status" value="ALT_FRAME"/>
    <property type="molecule type" value="mRNA"/>
</dbReference>
<dbReference type="EMBL" id="AC009260">
    <property type="status" value="NOT_ANNOTATED_CDS"/>
    <property type="molecule type" value="Genomic_DNA"/>
</dbReference>
<dbReference type="EMBL" id="AC069240">
    <property type="status" value="NOT_ANNOTATED_CDS"/>
    <property type="molecule type" value="Genomic_DNA"/>
</dbReference>
<dbReference type="EMBL" id="CH471054">
    <property type="protein sequence ID" value="EAW98066.1"/>
    <property type="molecule type" value="Genomic_DNA"/>
</dbReference>
<dbReference type="EMBL" id="BC027942">
    <property type="protein sequence ID" value="AAH27942.1"/>
    <property type="molecule type" value="mRNA"/>
</dbReference>
<dbReference type="CCDS" id="CCDS9173.1">
    <molecule id="Q99593-1"/>
</dbReference>
<dbReference type="CCDS" id="CCDS9174.1">
    <molecule id="Q99593-3"/>
</dbReference>
<dbReference type="RefSeq" id="NP_000183.2">
    <molecule id="Q99593-1"/>
    <property type="nucleotide sequence ID" value="NM_000192.3"/>
</dbReference>
<dbReference type="RefSeq" id="NP_542448.1">
    <molecule id="Q99593-3"/>
    <property type="nucleotide sequence ID" value="NM_080717.4"/>
</dbReference>
<dbReference type="RefSeq" id="NP_852259.1">
    <molecule id="Q99593-1"/>
    <property type="nucleotide sequence ID" value="NM_181486.4"/>
</dbReference>
<dbReference type="PDB" id="2X6U">
    <property type="method" value="X-ray"/>
    <property type="resolution" value="1.90 A"/>
    <property type="chains" value="A=51-251"/>
</dbReference>
<dbReference type="PDB" id="2X6V">
    <property type="method" value="X-ray"/>
    <property type="resolution" value="2.20 A"/>
    <property type="chains" value="A/B=51-251"/>
</dbReference>
<dbReference type="PDB" id="4S0H">
    <property type="method" value="X-ray"/>
    <property type="resolution" value="2.82 A"/>
    <property type="chains" value="A/E=53-238"/>
</dbReference>
<dbReference type="PDB" id="5BQD">
    <property type="method" value="X-ray"/>
    <property type="resolution" value="2.58 A"/>
    <property type="chains" value="A/B=1-239"/>
</dbReference>
<dbReference type="PDBsum" id="2X6U"/>
<dbReference type="PDBsum" id="2X6V"/>
<dbReference type="PDBsum" id="4S0H"/>
<dbReference type="PDBsum" id="5BQD"/>
<dbReference type="SMR" id="Q99593"/>
<dbReference type="BioGRID" id="112773">
    <property type="interactions" value="148"/>
</dbReference>
<dbReference type="CORUM" id="Q99593"/>
<dbReference type="FunCoup" id="Q99593">
    <property type="interactions" value="373"/>
</dbReference>
<dbReference type="IntAct" id="Q99593">
    <property type="interactions" value="9"/>
</dbReference>
<dbReference type="STRING" id="9606.ENSP00000309913"/>
<dbReference type="ChEMBL" id="CHEMBL1687681"/>
<dbReference type="iPTMnet" id="Q99593"/>
<dbReference type="PhosphoSitePlus" id="Q99593"/>
<dbReference type="BioMuta" id="TBX5"/>
<dbReference type="DMDM" id="12644474"/>
<dbReference type="jPOST" id="Q99593"/>
<dbReference type="MassIVE" id="Q99593"/>
<dbReference type="PaxDb" id="9606-ENSP00000309913"/>
<dbReference type="PeptideAtlas" id="Q99593"/>
<dbReference type="ProteomicsDB" id="78347">
    <molecule id="Q99593-1"/>
</dbReference>
<dbReference type="ProteomicsDB" id="78348">
    <molecule id="Q99593-2"/>
</dbReference>
<dbReference type="ProteomicsDB" id="886"/>
<dbReference type="ABCD" id="Q99593">
    <property type="antibodies" value="6 sequenced antibodies"/>
</dbReference>
<dbReference type="Antibodypedia" id="18791">
    <property type="antibodies" value="277 antibodies from 34 providers"/>
</dbReference>
<dbReference type="DNASU" id="6910"/>
<dbReference type="Ensembl" id="ENST00000310346.8">
    <molecule id="Q99593-1"/>
    <property type="protein sequence ID" value="ENSP00000309913.4"/>
    <property type="gene ID" value="ENSG00000089225.20"/>
</dbReference>
<dbReference type="Ensembl" id="ENST00000349716.9">
    <molecule id="Q99593-3"/>
    <property type="protein sequence ID" value="ENSP00000337723.5"/>
    <property type="gene ID" value="ENSG00000089225.20"/>
</dbReference>
<dbReference type="Ensembl" id="ENST00000405440.7">
    <molecule id="Q99593-1"/>
    <property type="protein sequence ID" value="ENSP00000384152.3"/>
    <property type="gene ID" value="ENSG00000089225.20"/>
</dbReference>
<dbReference type="Ensembl" id="ENST00000526441.1">
    <molecule id="Q99593-2"/>
    <property type="protein sequence ID" value="ENSP00000433292.1"/>
    <property type="gene ID" value="ENSG00000089225.20"/>
</dbReference>
<dbReference type="GeneID" id="6910"/>
<dbReference type="KEGG" id="hsa:6910"/>
<dbReference type="MANE-Select" id="ENST00000405440.7">
    <property type="protein sequence ID" value="ENSP00000384152.3"/>
    <property type="RefSeq nucleotide sequence ID" value="NM_181486.4"/>
    <property type="RefSeq protein sequence ID" value="NP_852259.1"/>
</dbReference>
<dbReference type="UCSC" id="uc001tvo.5">
    <molecule id="Q99593-1"/>
    <property type="organism name" value="human"/>
</dbReference>
<dbReference type="AGR" id="HGNC:11604"/>
<dbReference type="CTD" id="6910"/>
<dbReference type="DisGeNET" id="6910"/>
<dbReference type="GeneCards" id="TBX5"/>
<dbReference type="GeneReviews" id="TBX5"/>
<dbReference type="HGNC" id="HGNC:11604">
    <property type="gene designation" value="TBX5"/>
</dbReference>
<dbReference type="HPA" id="ENSG00000089225">
    <property type="expression patterns" value="Tissue enhanced (heart muscle, lung, placenta)"/>
</dbReference>
<dbReference type="MalaCards" id="TBX5"/>
<dbReference type="MIM" id="142900">
    <property type="type" value="phenotype"/>
</dbReference>
<dbReference type="MIM" id="601620">
    <property type="type" value="gene"/>
</dbReference>
<dbReference type="neXtProt" id="NX_Q99593"/>
<dbReference type="OpenTargets" id="ENSG00000089225"/>
<dbReference type="Orphanet" id="392">
    <property type="disease" value="Holt-Oram syndrome"/>
</dbReference>
<dbReference type="Orphanet" id="101016">
    <property type="disease" value="Romano-Ward syndrome"/>
</dbReference>
<dbReference type="PharmGKB" id="PA36367"/>
<dbReference type="VEuPathDB" id="HostDB:ENSG00000089225"/>
<dbReference type="eggNOG" id="KOG3585">
    <property type="taxonomic scope" value="Eukaryota"/>
</dbReference>
<dbReference type="GeneTree" id="ENSGT00940000156506"/>
<dbReference type="HOGENOM" id="CLU_037025_1_0_1"/>
<dbReference type="InParanoid" id="Q99593"/>
<dbReference type="OMA" id="CMYASSV"/>
<dbReference type="OrthoDB" id="7442607at2759"/>
<dbReference type="PAN-GO" id="Q99593">
    <property type="GO annotations" value="6 GO annotations based on evolutionary models"/>
</dbReference>
<dbReference type="PhylomeDB" id="Q99593"/>
<dbReference type="TreeFam" id="TF106341"/>
<dbReference type="PathwayCommons" id="Q99593"/>
<dbReference type="Reactome" id="R-HSA-2032785">
    <property type="pathway name" value="YAP1- and WWTR1 (TAZ)-stimulated gene expression"/>
</dbReference>
<dbReference type="Reactome" id="R-HSA-5578768">
    <property type="pathway name" value="Physiological factors"/>
</dbReference>
<dbReference type="Reactome" id="R-HSA-9733709">
    <property type="pathway name" value="Cardiogenesis"/>
</dbReference>
<dbReference type="SignaLink" id="Q99593"/>
<dbReference type="SIGNOR" id="Q99593"/>
<dbReference type="BioGRID-ORCS" id="6910">
    <property type="hits" value="11 hits in 1170 CRISPR screens"/>
</dbReference>
<dbReference type="ChiTaRS" id="TBX5">
    <property type="organism name" value="human"/>
</dbReference>
<dbReference type="EvolutionaryTrace" id="Q99593"/>
<dbReference type="GeneWiki" id="TBX5_(gene)"/>
<dbReference type="GenomeRNAi" id="6910"/>
<dbReference type="Pharos" id="Q99593">
    <property type="development level" value="Tbio"/>
</dbReference>
<dbReference type="PRO" id="PR:Q99593"/>
<dbReference type="Proteomes" id="UP000005640">
    <property type="component" value="Chromosome 12"/>
</dbReference>
<dbReference type="RNAct" id="Q99593">
    <property type="molecule type" value="protein"/>
</dbReference>
<dbReference type="Bgee" id="ENSG00000089225">
    <property type="expression patterns" value="Expressed in tendon of biceps brachii and 95 other cell types or tissues"/>
</dbReference>
<dbReference type="GO" id="GO:0000785">
    <property type="term" value="C:chromatin"/>
    <property type="evidence" value="ECO:0000247"/>
    <property type="project" value="NTNU_SB"/>
</dbReference>
<dbReference type="GO" id="GO:0005737">
    <property type="term" value="C:cytoplasm"/>
    <property type="evidence" value="ECO:0000314"/>
    <property type="project" value="UniProtKB"/>
</dbReference>
<dbReference type="GO" id="GO:0005654">
    <property type="term" value="C:nucleoplasm"/>
    <property type="evidence" value="ECO:0000304"/>
    <property type="project" value="Reactome"/>
</dbReference>
<dbReference type="GO" id="GO:0005634">
    <property type="term" value="C:nucleus"/>
    <property type="evidence" value="ECO:0000314"/>
    <property type="project" value="UniProtKB"/>
</dbReference>
<dbReference type="GO" id="GO:0032991">
    <property type="term" value="C:protein-containing complex"/>
    <property type="evidence" value="ECO:0000314"/>
    <property type="project" value="UniProtKB"/>
</dbReference>
<dbReference type="GO" id="GO:0032993">
    <property type="term" value="C:protein-DNA complex"/>
    <property type="evidence" value="ECO:0000314"/>
    <property type="project" value="UniProtKB"/>
</dbReference>
<dbReference type="GO" id="GO:0005667">
    <property type="term" value="C:transcription regulator complex"/>
    <property type="evidence" value="ECO:0007669"/>
    <property type="project" value="Ensembl"/>
</dbReference>
<dbReference type="GO" id="GO:0003677">
    <property type="term" value="F:DNA binding"/>
    <property type="evidence" value="ECO:0000314"/>
    <property type="project" value="UniProtKB"/>
</dbReference>
<dbReference type="GO" id="GO:0001228">
    <property type="term" value="F:DNA-binding transcription activator activity, RNA polymerase II-specific"/>
    <property type="evidence" value="ECO:0000250"/>
    <property type="project" value="BHF-UCL"/>
</dbReference>
<dbReference type="GO" id="GO:0003700">
    <property type="term" value="F:DNA-binding transcription factor activity"/>
    <property type="evidence" value="ECO:0000314"/>
    <property type="project" value="UniProtKB"/>
</dbReference>
<dbReference type="GO" id="GO:0000981">
    <property type="term" value="F:DNA-binding transcription factor activity, RNA polymerase II-specific"/>
    <property type="evidence" value="ECO:0000314"/>
    <property type="project" value="UniProtKB"/>
</dbReference>
<dbReference type="GO" id="GO:0000978">
    <property type="term" value="F:RNA polymerase II cis-regulatory region sequence-specific DNA binding"/>
    <property type="evidence" value="ECO:0000314"/>
    <property type="project" value="UniProtKB"/>
</dbReference>
<dbReference type="GO" id="GO:0061629">
    <property type="term" value="F:RNA polymerase II-specific DNA-binding transcription factor binding"/>
    <property type="evidence" value="ECO:0000353"/>
    <property type="project" value="BHF-UCL"/>
</dbReference>
<dbReference type="GO" id="GO:0043565">
    <property type="term" value="F:sequence-specific DNA binding"/>
    <property type="evidence" value="ECO:0000314"/>
    <property type="project" value="UniProtKB"/>
</dbReference>
<dbReference type="GO" id="GO:0060413">
    <property type="term" value="P:atrial septum morphogenesis"/>
    <property type="evidence" value="ECO:0007669"/>
    <property type="project" value="Ensembl"/>
</dbReference>
<dbReference type="GO" id="GO:0003167">
    <property type="term" value="P:atrioventricular bundle cell differentiation"/>
    <property type="evidence" value="ECO:0000250"/>
    <property type="project" value="BHF-UCL"/>
</dbReference>
<dbReference type="GO" id="GO:0060928">
    <property type="term" value="P:atrioventricular node cell development"/>
    <property type="evidence" value="ECO:0000250"/>
    <property type="project" value="BHF-UCL"/>
</dbReference>
<dbReference type="GO" id="GO:0060929">
    <property type="term" value="P:atrioventricular node cell fate commitment"/>
    <property type="evidence" value="ECO:0000250"/>
    <property type="project" value="BHF-UCL"/>
</dbReference>
<dbReference type="GO" id="GO:0003181">
    <property type="term" value="P:atrioventricular valve morphogenesis"/>
    <property type="evidence" value="ECO:0007669"/>
    <property type="project" value="Ensembl"/>
</dbReference>
<dbReference type="GO" id="GO:0086054">
    <property type="term" value="P:bundle of His cell to Purkinje myocyte communication by electrical coupling"/>
    <property type="evidence" value="ECO:0000250"/>
    <property type="project" value="BHF-UCL"/>
</dbReference>
<dbReference type="GO" id="GO:0003166">
    <property type="term" value="P:bundle of His development"/>
    <property type="evidence" value="ECO:0000250"/>
    <property type="project" value="BHF-UCL"/>
</dbReference>
<dbReference type="GO" id="GO:0003218">
    <property type="term" value="P:cardiac left ventricle formation"/>
    <property type="evidence" value="ECO:0000250"/>
    <property type="project" value="BHF-UCL"/>
</dbReference>
<dbReference type="GO" id="GO:0060038">
    <property type="term" value="P:cardiac muscle cell proliferation"/>
    <property type="evidence" value="ECO:0007669"/>
    <property type="project" value="Ensembl"/>
</dbReference>
<dbReference type="GO" id="GO:0001708">
    <property type="term" value="P:cell fate specification"/>
    <property type="evidence" value="ECO:0000318"/>
    <property type="project" value="GO_Central"/>
</dbReference>
<dbReference type="GO" id="GO:0060980">
    <property type="term" value="P:cell migration involved in coronary vasculogenesis"/>
    <property type="evidence" value="ECO:0000304"/>
    <property type="project" value="DFLAT"/>
</dbReference>
<dbReference type="GO" id="GO:0007267">
    <property type="term" value="P:cell-cell signaling"/>
    <property type="evidence" value="ECO:0000314"/>
    <property type="project" value="UniProtKB"/>
</dbReference>
<dbReference type="GO" id="GO:0035115">
    <property type="term" value="P:embryonic forelimb morphogenesis"/>
    <property type="evidence" value="ECO:0000315"/>
    <property type="project" value="UniProtKB"/>
</dbReference>
<dbReference type="GO" id="GO:0030326">
    <property type="term" value="P:embryonic limb morphogenesis"/>
    <property type="evidence" value="ECO:0000315"/>
    <property type="project" value="UniProtKB"/>
</dbReference>
<dbReference type="GO" id="GO:0003197">
    <property type="term" value="P:endocardial cushion development"/>
    <property type="evidence" value="ECO:0007669"/>
    <property type="project" value="Ensembl"/>
</dbReference>
<dbReference type="GO" id="GO:0035136">
    <property type="term" value="P:forelimb morphogenesis"/>
    <property type="evidence" value="ECO:0000315"/>
    <property type="project" value="MGI"/>
</dbReference>
<dbReference type="GO" id="GO:0007507">
    <property type="term" value="P:heart development"/>
    <property type="evidence" value="ECO:0000314"/>
    <property type="project" value="UniProtKB"/>
</dbReference>
<dbReference type="GO" id="GO:0030324">
    <property type="term" value="P:lung development"/>
    <property type="evidence" value="ECO:0007669"/>
    <property type="project" value="Ensembl"/>
</dbReference>
<dbReference type="GO" id="GO:0002009">
    <property type="term" value="P:morphogenesis of an epithelium"/>
    <property type="evidence" value="ECO:0007669"/>
    <property type="project" value="Ensembl"/>
</dbReference>
<dbReference type="GO" id="GO:0060044">
    <property type="term" value="P:negative regulation of cardiac muscle cell proliferation"/>
    <property type="evidence" value="ECO:0000314"/>
    <property type="project" value="UniProtKB"/>
</dbReference>
<dbReference type="GO" id="GO:0030336">
    <property type="term" value="P:negative regulation of cell migration"/>
    <property type="evidence" value="ECO:0000314"/>
    <property type="project" value="UniProtKB"/>
</dbReference>
<dbReference type="GO" id="GO:0008285">
    <property type="term" value="P:negative regulation of cell population proliferation"/>
    <property type="evidence" value="ECO:0000314"/>
    <property type="project" value="UniProtKB"/>
</dbReference>
<dbReference type="GO" id="GO:0010719">
    <property type="term" value="P:negative regulation of epithelial to mesenchymal transition"/>
    <property type="evidence" value="ECO:0000304"/>
    <property type="project" value="DFLAT"/>
</dbReference>
<dbReference type="GO" id="GO:0007389">
    <property type="term" value="P:pattern specification process"/>
    <property type="evidence" value="ECO:0000318"/>
    <property type="project" value="GO_Central"/>
</dbReference>
<dbReference type="GO" id="GO:0060039">
    <property type="term" value="P:pericardium development"/>
    <property type="evidence" value="ECO:0000314"/>
    <property type="project" value="UniProtKB"/>
</dbReference>
<dbReference type="GO" id="GO:1903781">
    <property type="term" value="P:positive regulation of cardiac conduction"/>
    <property type="evidence" value="ECO:0000250"/>
    <property type="project" value="BHF-UCL"/>
</dbReference>
<dbReference type="GO" id="GO:0060045">
    <property type="term" value="P:positive regulation of cardiac muscle cell proliferation"/>
    <property type="evidence" value="ECO:0007669"/>
    <property type="project" value="Ensembl"/>
</dbReference>
<dbReference type="GO" id="GO:0051891">
    <property type="term" value="P:positive regulation of cardioblast differentiation"/>
    <property type="evidence" value="ECO:0000314"/>
    <property type="project" value="UniProtKB"/>
</dbReference>
<dbReference type="GO" id="GO:1901846">
    <property type="term" value="P:positive regulation of cell communication by electrical coupling involved in cardiac conduction"/>
    <property type="evidence" value="ECO:0000304"/>
    <property type="project" value="BHF-UCL"/>
</dbReference>
<dbReference type="GO" id="GO:0045893">
    <property type="term" value="P:positive regulation of DNA-templated transcription"/>
    <property type="evidence" value="ECO:0000314"/>
    <property type="project" value="UniProtKB"/>
</dbReference>
<dbReference type="GO" id="GO:1903598">
    <property type="term" value="P:positive regulation of gap junction assembly"/>
    <property type="evidence" value="ECO:0000250"/>
    <property type="project" value="BHF-UCL"/>
</dbReference>
<dbReference type="GO" id="GO:0072513">
    <property type="term" value="P:positive regulation of secondary heart field cardioblast proliferation"/>
    <property type="evidence" value="ECO:0007669"/>
    <property type="project" value="Ensembl"/>
</dbReference>
<dbReference type="GO" id="GO:0045944">
    <property type="term" value="P:positive regulation of transcription by RNA polymerase II"/>
    <property type="evidence" value="ECO:0000314"/>
    <property type="project" value="UniProtKB"/>
</dbReference>
<dbReference type="GO" id="GO:0060371">
    <property type="term" value="P:regulation of atrial cardiac muscle cell membrane depolarization"/>
    <property type="evidence" value="ECO:0000250"/>
    <property type="project" value="BHF-UCL"/>
</dbReference>
<dbReference type="GO" id="GO:0006357">
    <property type="term" value="P:regulation of transcription by RNA polymerase II"/>
    <property type="evidence" value="ECO:0000318"/>
    <property type="project" value="GO_Central"/>
</dbReference>
<dbReference type="GO" id="GO:0003163">
    <property type="term" value="P:sinoatrial node development"/>
    <property type="evidence" value="ECO:0000250"/>
    <property type="project" value="BHF-UCL"/>
</dbReference>
<dbReference type="GO" id="GO:0006366">
    <property type="term" value="P:transcription by RNA polymerase II"/>
    <property type="evidence" value="ECO:0007669"/>
    <property type="project" value="Ensembl"/>
</dbReference>
<dbReference type="GO" id="GO:0003281">
    <property type="term" value="P:ventricular septum development"/>
    <property type="evidence" value="ECO:0000250"/>
    <property type="project" value="BHF-UCL"/>
</dbReference>
<dbReference type="CDD" id="cd20189">
    <property type="entry name" value="T-box_TBX4_5-like"/>
    <property type="match status" value="1"/>
</dbReference>
<dbReference type="FunFam" id="2.60.40.820:FF:000005">
    <property type="entry name" value="T-box transcription factor TBX5"/>
    <property type="match status" value="1"/>
</dbReference>
<dbReference type="Gene3D" id="2.60.40.820">
    <property type="entry name" value="Transcription factor, T-box"/>
    <property type="match status" value="1"/>
</dbReference>
<dbReference type="InterPro" id="IPR008967">
    <property type="entry name" value="p53-like_TF_DNA-bd_sf"/>
</dbReference>
<dbReference type="InterPro" id="IPR046360">
    <property type="entry name" value="T-box_DNA-bd"/>
</dbReference>
<dbReference type="InterPro" id="IPR036960">
    <property type="entry name" value="T-box_sf"/>
</dbReference>
<dbReference type="InterPro" id="IPR001699">
    <property type="entry name" value="TF_T-box"/>
</dbReference>
<dbReference type="InterPro" id="IPR018186">
    <property type="entry name" value="TF_T-box_CS"/>
</dbReference>
<dbReference type="PANTHER" id="PTHR11267">
    <property type="entry name" value="T-BOX PROTEIN-RELATED"/>
    <property type="match status" value="1"/>
</dbReference>
<dbReference type="PANTHER" id="PTHR11267:SF28">
    <property type="entry name" value="T-BOX TRANSCRIPTION FACTOR TBX5"/>
    <property type="match status" value="1"/>
</dbReference>
<dbReference type="Pfam" id="PF00907">
    <property type="entry name" value="T-box"/>
    <property type="match status" value="1"/>
</dbReference>
<dbReference type="PRINTS" id="PR00937">
    <property type="entry name" value="TBOX"/>
</dbReference>
<dbReference type="SMART" id="SM00425">
    <property type="entry name" value="TBOX"/>
    <property type="match status" value="1"/>
</dbReference>
<dbReference type="SUPFAM" id="SSF49417">
    <property type="entry name" value="p53-like transcription factors"/>
    <property type="match status" value="1"/>
</dbReference>
<dbReference type="PROSITE" id="PS01283">
    <property type="entry name" value="TBOX_1"/>
    <property type="match status" value="1"/>
</dbReference>
<dbReference type="PROSITE" id="PS01264">
    <property type="entry name" value="TBOX_2"/>
    <property type="match status" value="1"/>
</dbReference>
<dbReference type="PROSITE" id="PS50252">
    <property type="entry name" value="TBOX_3"/>
    <property type="match status" value="1"/>
</dbReference>
<proteinExistence type="evidence at protein level"/>
<feature type="chain" id="PRO_0000184435" description="T-box transcription factor TBX5">
    <location>
        <begin position="1"/>
        <end position="518"/>
    </location>
</feature>
<feature type="DNA-binding region" description="T-box" evidence="1 12">
    <location>
        <begin position="58"/>
        <end position="238"/>
    </location>
</feature>
<feature type="region of interest" description="Disordered" evidence="2">
    <location>
        <begin position="1"/>
        <end position="46"/>
    </location>
</feature>
<feature type="region of interest" description="Disordered" evidence="2">
    <location>
        <begin position="250"/>
        <end position="356"/>
    </location>
</feature>
<feature type="compositionally biased region" description="Basic and acidic residues" evidence="2">
    <location>
        <begin position="15"/>
        <end position="28"/>
    </location>
</feature>
<feature type="compositionally biased region" description="Low complexity" evidence="2">
    <location>
        <begin position="34"/>
        <end position="45"/>
    </location>
</feature>
<feature type="compositionally biased region" description="Polar residues" evidence="2">
    <location>
        <begin position="262"/>
        <end position="301"/>
    </location>
</feature>
<feature type="modified residue" description="N6-acetyllysine" evidence="14">
    <location>
        <position position="339"/>
    </location>
</feature>
<feature type="splice variant" id="VSP_046845" description="In isoform 3." evidence="18">
    <location>
        <begin position="1"/>
        <end position="50"/>
    </location>
</feature>
<feature type="splice variant" id="VSP_006387" description="In isoform 2." evidence="17">
    <original>EEECSTTDHPYKKPYMETSPSE</original>
    <variation>GECDHPWSICFLSYLFLSLGWG</variation>
    <location>
        <begin position="328"/>
        <end position="349"/>
    </location>
</feature>
<feature type="splice variant" id="VSP_006388" description="In isoform 2." evidence="17">
    <location>
        <begin position="350"/>
        <end position="518"/>
    </location>
</feature>
<feature type="sequence variant" id="VAR_015381" description="In HOS; dbSNP:rs104894383." evidence="4">
    <original>Q</original>
    <variation>K</variation>
    <location>
        <position position="49"/>
    </location>
</feature>
<feature type="sequence variant" id="VAR_015382" description="In HOS; dbSNP:rs104894384." evidence="4">
    <original>I</original>
    <variation>T</variation>
    <location>
        <position position="54"/>
    </location>
</feature>
<feature type="sequence variant" id="VAR_009701" description="In HOS; significant cardiac malformations but only minor skeletal abnormalities; reduced protein stability and strongly reduced affinity for DNA; dbSNP:rs104894381." evidence="3 7">
    <original>G</original>
    <variation>R</variation>
    <location>
        <position position="80"/>
    </location>
</feature>
<feature type="sequence variant" id="VAR_076673" description="Found in a patient with atrial fibrillation; uncertain significance; reduces transcriptional activity; affects transcriptional regulation of NKX2-5." evidence="13">
    <original>P</original>
    <variation>S</variation>
    <location>
        <position position="132"/>
    </location>
</feature>
<feature type="sequence variant" id="VAR_074599" description="Found in a patient with sporadic dilated cardiomyopathy; uncertain significance; associated with significantly decreased transcriptional activity; dbSNP:rs374906778." evidence="10">
    <original>A</original>
    <variation>T</variation>
    <location>
        <position position="143"/>
    </location>
</feature>
<feature type="sequence variant" id="VAR_074600" description="Found in patients with familial dilated cardiomyopathy; uncertain significance; associated with significantly decreased transcriptional activity." evidence="9">
    <original>S</original>
    <variation>A</variation>
    <location>
        <position position="154"/>
    </location>
</feature>
<feature type="sequence variant" id="VAR_076642" description="Found in a patient with atrial fibrillation; uncertain significance; reduces transcriptional activity; affects transcriptional regulation of NKX2-5 or GATA4." evidence="11">
    <original>H</original>
    <variation>D</variation>
    <location>
        <position position="170"/>
    </location>
</feature>
<feature type="sequence variant" id="VAR_007456" description="In HOS; extensive upper limb malformations; affects transcriptional regulation of MYH6; dbSNP:rs104894378." evidence="3 6 16">
    <original>R</original>
    <variation>Q</variation>
    <location>
        <position position="237"/>
    </location>
</feature>
<feature type="sequence variant" id="VAR_009702" description="In HOS; extensive upper limb malformations; strongly reduced affinity for DNA; dbSNP:rs104894382." evidence="3 7">
    <original>R</original>
    <variation>W</variation>
    <location>
        <position position="237"/>
    </location>
</feature>
<feature type="mutagenesis site" description="Does not affect acetylation of the protein." evidence="14">
    <original>K</original>
    <variation>R</variation>
    <location>
        <position position="234"/>
    </location>
</feature>
<feature type="mutagenesis site" description="Does not affect transcription factor activity." evidence="14">
    <original>K</original>
    <variation>R</variation>
    <location>
        <position position="325"/>
    </location>
</feature>
<feature type="mutagenesis site" description="Does not affect transcription factor activity." evidence="14">
    <original>K</original>
    <variation>R</variation>
    <location>
        <position position="327"/>
    </location>
</feature>
<feature type="mutagenesis site" description="Abolishes acetylation of the protein, leading to impaired transcription factor activity. Impaired subcellular location." evidence="14">
    <original>K</original>
    <variation>R</variation>
    <location>
        <position position="339"/>
    </location>
</feature>
<feature type="mutagenesis site" description="Does not affect transcription factor activity." evidence="14">
    <original>K</original>
    <variation>R</variation>
    <location>
        <position position="340"/>
    </location>
</feature>
<feature type="sequence conflict" description="In Ref. 1; CAA70592." evidence="19" ref="1">
    <original>GFGLAHTPLEPDAKDLPCDSKPESALGAPSKSPSSPQAAFTQQ</original>
    <variation>ALAGAHLWSLTQKTCLRFEPRARSGPPASPPGRPRSRLHPA</variation>
    <location>
        <begin position="7"/>
        <end position="49"/>
    </location>
</feature>
<feature type="sequence conflict" description="In Ref. 1; CAA70592." evidence="19" ref="1">
    <location>
        <position position="71"/>
    </location>
</feature>
<feature type="sequence conflict" description="In Ref. 1; CAA70592." evidence="19" ref="1">
    <original>L</original>
    <variation>I</variation>
    <location>
        <position position="94"/>
    </location>
</feature>
<feature type="sequence conflict" description="In Ref. 1; CAA70592." evidence="19" ref="1">
    <original>S</original>
    <variation>C</variation>
    <location>
        <position position="122"/>
    </location>
</feature>
<feature type="sequence conflict" description="In Ref. 1; CAA70592." evidence="19" ref="1">
    <original>P</original>
    <variation>A</variation>
    <location>
        <position position="132"/>
    </location>
</feature>
<feature type="sequence conflict" description="In Ref. 1; CAA70592." evidence="19" ref="1">
    <original>MDRLPYQHFSAHFTSGPLVPRLAGMANHGSPQLGEGMFQHQTS</original>
    <variation>WTGYPTSTSPLTSPRGPWSLGWLAWQPWLPTAGRGNVPSTRPP</variation>
    <location>
        <begin position="418"/>
        <end position="460"/>
    </location>
</feature>
<feature type="sequence conflict" description="In Ref. 1; CAA70592." evidence="19" ref="1">
    <original>RQC</original>
    <variation>SSV</variation>
    <location>
        <begin position="468"/>
        <end position="470"/>
    </location>
</feature>
<feature type="sequence conflict" description="In Ref. 1; CAA70592." evidence="19" ref="1">
    <original>PRTLSPHQYHSVHGVGMVPEWSDNS</original>
    <variation>QGLYPLISTTLCTELAWCRVERQ</variation>
    <location>
        <begin position="494"/>
        <end position="518"/>
    </location>
</feature>
<feature type="strand" evidence="23">
    <location>
        <begin position="43"/>
        <end position="48"/>
    </location>
</feature>
<feature type="strand" evidence="20">
    <location>
        <begin position="55"/>
        <end position="58"/>
    </location>
</feature>
<feature type="helix" evidence="20">
    <location>
        <begin position="61"/>
        <end position="70"/>
    </location>
</feature>
<feature type="strand" evidence="20">
    <location>
        <begin position="73"/>
        <end position="75"/>
    </location>
</feature>
<feature type="strand" evidence="20">
    <location>
        <begin position="77"/>
        <end position="79"/>
    </location>
</feature>
<feature type="strand" evidence="20">
    <location>
        <begin position="88"/>
        <end position="93"/>
    </location>
</feature>
<feature type="strand" evidence="20">
    <location>
        <begin position="96"/>
        <end position="117"/>
    </location>
</feature>
<feature type="strand" evidence="20">
    <location>
        <begin position="120"/>
        <end position="126"/>
    </location>
</feature>
<feature type="strand" evidence="20">
    <location>
        <begin position="142"/>
        <end position="144"/>
    </location>
</feature>
<feature type="helix" evidence="20">
    <location>
        <begin position="145"/>
        <end position="150"/>
    </location>
</feature>
<feature type="strand" evidence="22">
    <location>
        <begin position="153"/>
        <end position="155"/>
    </location>
</feature>
<feature type="strand" evidence="20">
    <location>
        <begin position="159"/>
        <end position="161"/>
    </location>
</feature>
<feature type="strand" evidence="20">
    <location>
        <begin position="177"/>
        <end position="187"/>
    </location>
</feature>
<feature type="strand" evidence="20">
    <location>
        <begin position="194"/>
        <end position="197"/>
    </location>
</feature>
<feature type="strand" evidence="20">
    <location>
        <begin position="201"/>
        <end position="204"/>
    </location>
</feature>
<feature type="helix" evidence="20">
    <location>
        <begin position="207"/>
        <end position="209"/>
    </location>
</feature>
<feature type="strand" evidence="20">
    <location>
        <begin position="211"/>
        <end position="216"/>
    </location>
</feature>
<feature type="helix" evidence="20">
    <location>
        <begin position="220"/>
        <end position="229"/>
    </location>
</feature>
<feature type="helix" evidence="21">
    <location>
        <begin position="231"/>
        <end position="236"/>
    </location>
</feature>
<comment type="function">
    <text evidence="9 10 11 12 13 14 15">DNA-binding protein that regulates the transcription of several genes and is involved in heart development and limb pattern formation (PubMed:25725155, PubMed:25963046, PubMed:26917986, PubMed:27035640, PubMed:29174768, PubMed:8988164). Binds to the core DNA motif of NPPA promoter (PubMed:26926761).</text>
</comment>
<comment type="subunit">
    <text evidence="7 8 12 14">Monomer (PubMed:20450920). Homodimer (via the T-box); binds DNA as homodimer (PubMed:26926761). Interacts (via the T-box) with NKX2-5 (via the homeobox); this complex binds DNA (PubMed:26926761). Interacts with GATA4 (PubMed:24000169). Interacts with KAT2A and KAT2B (PubMed:29174768).</text>
</comment>
<comment type="interaction">
    <interactant intactId="EBI-297043">
        <id>Q99593</id>
    </interactant>
    <interactant intactId="EBI-9092016">
        <id>Q9UQB8-6</id>
        <label>BAIAP2</label>
    </interactant>
    <organismsDiffer>false</organismsDiffer>
    <experiments>3</experiments>
</comment>
<comment type="interaction">
    <interactant intactId="EBI-297043">
        <id>Q99593</id>
    </interactant>
    <interactant intactId="EBI-1044059">
        <id>P46937</id>
        <label>YAP1</label>
    </interactant>
    <organismsDiffer>false</organismsDiffer>
    <experiments>4</experiments>
</comment>
<comment type="interaction">
    <interactant intactId="EBI-297043">
        <id>Q99593</id>
    </interactant>
    <interactant intactId="EBI-747061">
        <id>O75800</id>
        <label>ZMYND10</label>
    </interactant>
    <organismsDiffer>false</organismsDiffer>
    <experiments>3</experiments>
</comment>
<comment type="interaction">
    <interactant intactId="EBI-297043">
        <id>Q99593</id>
    </interactant>
    <interactant intactId="EBI-297008">
        <id>Q08369</id>
        <label>Gata4</label>
    </interactant>
    <organismsDiffer>true</organismsDiffer>
    <experiments>2</experiments>
</comment>
<comment type="interaction">
    <interactant intactId="EBI-304423">
        <id>Q99593-1</id>
    </interactant>
    <interactant intactId="EBI-936601">
        <id>P52952</id>
        <label>NKX2-5</label>
    </interactant>
    <organismsDiffer>false</organismsDiffer>
    <experiments>6</experiments>
</comment>
<comment type="subcellular location">
    <subcellularLocation>
        <location evidence="1 14">Nucleus</location>
    </subcellularLocation>
    <subcellularLocation>
        <location evidence="14">Cytoplasm</location>
    </subcellularLocation>
    <text evidence="14">Shuttles between the cytoplasm and the nucleus. Acetylation at Lys-339 promotes nuclear retention.</text>
</comment>
<comment type="alternative products">
    <event type="alternative splicing"/>
    <isoform>
        <id>Q99593-1</id>
        <name>1</name>
        <name>Long</name>
        <sequence type="displayed"/>
    </isoform>
    <isoform>
        <id>Q99593-2</id>
        <name>2</name>
        <name>Short</name>
        <sequence type="described" ref="VSP_006387 VSP_006388"/>
    </isoform>
    <isoform>
        <id>Q99593-3</id>
        <name>3</name>
        <sequence type="described" ref="VSP_046845"/>
    </isoform>
</comment>
<comment type="domain">
    <text evidence="12">The T-Box domain binds to double-stranded DNA (PubMed:26926761).</text>
</comment>
<comment type="PTM">
    <text evidence="14">Acetylation at Lys-339 by KAT2A and KAT2B promotes nuclear retention.</text>
</comment>
<comment type="disease" evidence="3 4 5 6 7 15 16">
    <disease id="DI-01752">
        <name>Holt-Oram syndrome</name>
        <acronym>HOS</acronym>
        <description>Developmental disorder affecting the heart and upper limbs. It is characterized by thumb anomaly and atrial septal defects.</description>
        <dbReference type="MIM" id="142900"/>
    </disease>
    <text>The disease is caused by variants affecting the gene represented in this entry.</text>
</comment>
<comment type="disease">
    <text evidence="9 10 11 13">Defects in TBX5 are associated with susceptibility to heart disorders including dilated cardiomyopathy (DCM) and atrial fibrillation (AF). DCM is characterized by ventricular and impaired systolic function, resulting in heart failure and arrhythmia. Patient are at risk of premature death. AF is a common sustained cardiac rhythm disturbance. AF is characterized by disorganized atrial electrical activity and ineffective atrial contraction promoting blood stasis in the atria and reduces ventricular filling. It can result in palpitations, syncope, thromboembolic stroke, and congestive heart failure.</text>
</comment>
<comment type="sequence caution" evidence="19">
    <conflict type="frameshift">
        <sequence resource="EMBL-CDS" id="BAB55448"/>
    </conflict>
</comment>
<sequence>MADADEGFGLAHTPLEPDAKDLPCDSKPESALGAPSKSPSSPQAAFTQQGMEGIKVFLHERELWLKFHEVGTEMIITKAGRRMFPSYKVKVTGLNPKTKYILLMDIVPADDHRYKFADNKWSVTGKAEPAMPGRLYVHPDSPATGAHWMRQLVSFQKLKLTNNHLDPFGHIILNSMHKYQPRLHIVKADENNGFGSKNTAFCTHVFPETAFIAVTSYQNHKITQLKIENNPFAKGFRGSDDMELHRMSRMQSKEYPVVPRSTVRQKVASNHSPFSSESRALSTSSNLGSQYQCENGVSGPSQDLLPPPNPYPLPQEHSQIYHCTKRKEEECSTTDHPYKKPYMETSPSEEDSFYRSSYPQQQGLGASYRTESAQRQACMYASSAPPSEPVPSLEDISCNTWPSMPSYSSCTVTTVQPMDRLPYQHFSAHFTSGPLVPRLAGMANHGSPQLGEGMFQHQTSVAHQPVVRQCGPQTGLQSPGTLQPPEFLYSHGVPRTLSPHQYHSVHGVGMVPEWSDNS</sequence>
<accession>Q99593</accession>
<accession>A6ND77</accession>
<accession>O15301</accession>
<accession>Q96TB0</accession>
<accession>Q9Y4I2</accession>
<evidence type="ECO:0000255" key="1">
    <source>
        <dbReference type="PROSITE-ProRule" id="PRU00201"/>
    </source>
</evidence>
<evidence type="ECO:0000256" key="2">
    <source>
        <dbReference type="SAM" id="MobiDB-lite"/>
    </source>
</evidence>
<evidence type="ECO:0000269" key="3">
    <source>
    </source>
</evidence>
<evidence type="ECO:0000269" key="4">
    <source>
    </source>
</evidence>
<evidence type="ECO:0000269" key="5">
    <source>
    </source>
</evidence>
<evidence type="ECO:0000269" key="6">
    <source>
    </source>
</evidence>
<evidence type="ECO:0000269" key="7">
    <source>
    </source>
</evidence>
<evidence type="ECO:0000269" key="8">
    <source>
    </source>
</evidence>
<evidence type="ECO:0000269" key="9">
    <source>
    </source>
</evidence>
<evidence type="ECO:0000269" key="10">
    <source>
    </source>
</evidence>
<evidence type="ECO:0000269" key="11">
    <source>
    </source>
</evidence>
<evidence type="ECO:0000269" key="12">
    <source>
    </source>
</evidence>
<evidence type="ECO:0000269" key="13">
    <source>
    </source>
</evidence>
<evidence type="ECO:0000269" key="14">
    <source>
    </source>
</evidence>
<evidence type="ECO:0000269" key="15">
    <source>
    </source>
</evidence>
<evidence type="ECO:0000269" key="16">
    <source>
    </source>
</evidence>
<evidence type="ECO:0000303" key="17">
    <source>
    </source>
</evidence>
<evidence type="ECO:0000303" key="18">
    <source ref="5"/>
</evidence>
<evidence type="ECO:0000305" key="19"/>
<evidence type="ECO:0007829" key="20">
    <source>
        <dbReference type="PDB" id="2X6U"/>
    </source>
</evidence>
<evidence type="ECO:0007829" key="21">
    <source>
        <dbReference type="PDB" id="2X6V"/>
    </source>
</evidence>
<evidence type="ECO:0007829" key="22">
    <source>
        <dbReference type="PDB" id="4S0H"/>
    </source>
</evidence>
<evidence type="ECO:0007829" key="23">
    <source>
        <dbReference type="PDB" id="5BQD"/>
    </source>
</evidence>
<organism>
    <name type="scientific">Homo sapiens</name>
    <name type="common">Human</name>
    <dbReference type="NCBI Taxonomy" id="9606"/>
    <lineage>
        <taxon>Eukaryota</taxon>
        <taxon>Metazoa</taxon>
        <taxon>Chordata</taxon>
        <taxon>Craniata</taxon>
        <taxon>Vertebrata</taxon>
        <taxon>Euteleostomi</taxon>
        <taxon>Mammalia</taxon>
        <taxon>Eutheria</taxon>
        <taxon>Euarchontoglires</taxon>
        <taxon>Primates</taxon>
        <taxon>Haplorrhini</taxon>
        <taxon>Catarrhini</taxon>
        <taxon>Hominidae</taxon>
        <taxon>Homo</taxon>
    </lineage>
</organism>